<evidence type="ECO:0000250" key="1"/>
<evidence type="ECO:0000255" key="2">
    <source>
        <dbReference type="PROSITE-ProRule" id="PRU00176"/>
    </source>
</evidence>
<evidence type="ECO:0000256" key="3">
    <source>
        <dbReference type="SAM" id="MobiDB-lite"/>
    </source>
</evidence>
<evidence type="ECO:0000269" key="4">
    <source>
    </source>
</evidence>
<evidence type="ECO:0000269" key="5">
    <source>
    </source>
</evidence>
<evidence type="ECO:0000269" key="6">
    <source>
    </source>
</evidence>
<evidence type="ECO:0000269" key="7">
    <source>
    </source>
</evidence>
<evidence type="ECO:0000269" key="8">
    <source>
    </source>
</evidence>
<evidence type="ECO:0000269" key="9">
    <source>
    </source>
</evidence>
<evidence type="ECO:0000269" key="10">
    <source>
    </source>
</evidence>
<evidence type="ECO:0000303" key="11">
    <source>
    </source>
</evidence>
<evidence type="ECO:0000303" key="12">
    <source>
    </source>
</evidence>
<evidence type="ECO:0000303" key="13">
    <source>
    </source>
</evidence>
<evidence type="ECO:0000305" key="14"/>
<evidence type="ECO:0007744" key="15">
    <source>
    </source>
</evidence>
<evidence type="ECO:0007744" key="16">
    <source>
    </source>
</evidence>
<evidence type="ECO:0007829" key="17">
    <source>
        <dbReference type="PDB" id="3SP6"/>
    </source>
</evidence>
<evidence type="ECO:0007829" key="18">
    <source>
        <dbReference type="PDB" id="6D0Y"/>
    </source>
</evidence>
<keyword id="KW-0002">3D-structure</keyword>
<keyword id="KW-0010">Activator</keyword>
<keyword id="KW-0025">Alternative splicing</keyword>
<keyword id="KW-0539">Nucleus</keyword>
<keyword id="KW-0597">Phosphoprotein</keyword>
<keyword id="KW-1267">Proteomics identification</keyword>
<keyword id="KW-1185">Reference proteome</keyword>
<keyword id="KW-0677">Repeat</keyword>
<keyword id="KW-0694">RNA-binding</keyword>
<keyword id="KW-0804">Transcription</keyword>
<keyword id="KW-0805">Transcription regulation</keyword>
<dbReference type="EMBL" id="AF468496">
    <property type="protein sequence ID" value="AAL78633.1"/>
    <property type="molecule type" value="mRNA"/>
</dbReference>
<dbReference type="EMBL" id="AF468497">
    <property type="protein sequence ID" value="AAL78634.1"/>
    <property type="molecule type" value="mRNA"/>
</dbReference>
<dbReference type="EMBL" id="AY188947">
    <property type="protein sequence ID" value="AAO40022.1"/>
    <property type="molecule type" value="mRNA"/>
</dbReference>
<dbReference type="EMBL" id="AY188948">
    <property type="protein sequence ID" value="AAO40023.1"/>
    <property type="molecule type" value="mRNA"/>
</dbReference>
<dbReference type="EMBL" id="AY188949">
    <property type="protein sequence ID" value="AAO40024.1"/>
    <property type="molecule type" value="mRNA"/>
</dbReference>
<dbReference type="EMBL" id="AY188950">
    <property type="protein sequence ID" value="AAO40025.1"/>
    <property type="molecule type" value="mRNA"/>
</dbReference>
<dbReference type="EMBL" id="AK095391">
    <property type="protein sequence ID" value="BAC04541.1"/>
    <property type="molecule type" value="mRNA"/>
</dbReference>
<dbReference type="EMBL" id="AK123614">
    <property type="protein sequence ID" value="BAG53922.1"/>
    <property type="molecule type" value="mRNA"/>
</dbReference>
<dbReference type="EMBL" id="AC008545">
    <property type="status" value="NOT_ANNOTATED_CDS"/>
    <property type="molecule type" value="Genomic_DNA"/>
</dbReference>
<dbReference type="EMBL" id="AC022100">
    <property type="status" value="NOT_ANNOTATED_CDS"/>
    <property type="molecule type" value="Genomic_DNA"/>
</dbReference>
<dbReference type="EMBL" id="CH471062">
    <property type="protein sequence ID" value="EAW61759.1"/>
    <property type="molecule type" value="Genomic_DNA"/>
</dbReference>
<dbReference type="EMBL" id="BC132971">
    <property type="protein sequence ID" value="AAI32972.1"/>
    <property type="molecule type" value="mRNA"/>
</dbReference>
<dbReference type="EMBL" id="BC132973">
    <property type="protein sequence ID" value="AAI32974.1"/>
    <property type="molecule type" value="mRNA"/>
</dbReference>
<dbReference type="CCDS" id="CCDS4298.1">
    <molecule id="Q86YN6-1"/>
</dbReference>
<dbReference type="CCDS" id="CCDS54933.1">
    <molecule id="Q86YN6-5"/>
</dbReference>
<dbReference type="CCDS" id="CCDS54934.1">
    <molecule id="Q86YN6-6"/>
</dbReference>
<dbReference type="RefSeq" id="NP_001166169.1">
    <molecule id="Q86YN6-5"/>
    <property type="nucleotide sequence ID" value="NM_001172698.2"/>
</dbReference>
<dbReference type="RefSeq" id="NP_001166170.1">
    <molecule id="Q86YN6-6"/>
    <property type="nucleotide sequence ID" value="NM_001172699.2"/>
</dbReference>
<dbReference type="RefSeq" id="NP_573570.3">
    <molecule id="Q86YN6-1"/>
    <property type="nucleotide sequence ID" value="NM_133263.3"/>
</dbReference>
<dbReference type="RefSeq" id="XP_005268429.1">
    <molecule id="Q86YN6-2"/>
    <property type="nucleotide sequence ID" value="XM_005268372.4"/>
</dbReference>
<dbReference type="RefSeq" id="XP_054207563.1">
    <molecule id="Q86YN6-2"/>
    <property type="nucleotide sequence ID" value="XM_054351588.1"/>
</dbReference>
<dbReference type="PDB" id="3SP6">
    <property type="method" value="X-ray"/>
    <property type="resolution" value="2.21 A"/>
    <property type="chains" value="B=153-163"/>
</dbReference>
<dbReference type="PDB" id="6D0Y">
    <property type="method" value="X-ray"/>
    <property type="resolution" value="2.68 A"/>
    <property type="chains" value="B=994-1023"/>
</dbReference>
<dbReference type="PDBsum" id="3SP6"/>
<dbReference type="PDBsum" id="6D0Y"/>
<dbReference type="SMR" id="Q86YN6"/>
<dbReference type="BioGRID" id="126361">
    <property type="interactions" value="28"/>
</dbReference>
<dbReference type="FunCoup" id="Q86YN6">
    <property type="interactions" value="2288"/>
</dbReference>
<dbReference type="IntAct" id="Q86YN6">
    <property type="interactions" value="12"/>
</dbReference>
<dbReference type="STRING" id="9606.ENSP00000312649"/>
<dbReference type="DrugBank" id="DB01118">
    <property type="generic name" value="Amiodarone"/>
</dbReference>
<dbReference type="TCDB" id="8.A.246.1.1">
    <property type="family name" value="the peroxisome proliferator-activated receptor gamma coactivator 1-beta (pgc-1a) family"/>
</dbReference>
<dbReference type="GlyGen" id="Q86YN6">
    <property type="glycosylation" value="3 sites, 1 O-linked glycan (2 sites)"/>
</dbReference>
<dbReference type="iPTMnet" id="Q86YN6"/>
<dbReference type="PhosphoSitePlus" id="Q86YN6"/>
<dbReference type="BioMuta" id="PPARGC1B"/>
<dbReference type="DMDM" id="116242724"/>
<dbReference type="jPOST" id="Q86YN6"/>
<dbReference type="MassIVE" id="Q86YN6"/>
<dbReference type="PaxDb" id="9606-ENSP00000312649"/>
<dbReference type="PeptideAtlas" id="Q86YN6"/>
<dbReference type="ProteomicsDB" id="70440">
    <molecule id="Q86YN6-1"/>
</dbReference>
<dbReference type="ProteomicsDB" id="70441">
    <molecule id="Q86YN6-2"/>
</dbReference>
<dbReference type="ProteomicsDB" id="70442">
    <molecule id="Q86YN6-3"/>
</dbReference>
<dbReference type="ProteomicsDB" id="70443">
    <molecule id="Q86YN6-4"/>
</dbReference>
<dbReference type="ProteomicsDB" id="70444">
    <molecule id="Q86YN6-5"/>
</dbReference>
<dbReference type="ProteomicsDB" id="70445">
    <molecule id="Q86YN6-6"/>
</dbReference>
<dbReference type="Antibodypedia" id="27863">
    <property type="antibodies" value="129 antibodies from 30 providers"/>
</dbReference>
<dbReference type="DNASU" id="133522"/>
<dbReference type="Ensembl" id="ENST00000309241.10">
    <molecule id="Q86YN6-1"/>
    <property type="protein sequence ID" value="ENSP00000312649.5"/>
    <property type="gene ID" value="ENSG00000155846.17"/>
</dbReference>
<dbReference type="Ensembl" id="ENST00000360453.8">
    <molecule id="Q86YN6-5"/>
    <property type="protein sequence ID" value="ENSP00000353638.4"/>
    <property type="gene ID" value="ENSG00000155846.17"/>
</dbReference>
<dbReference type="Ensembl" id="ENST00000394320.7">
    <molecule id="Q86YN6-3"/>
    <property type="protein sequence ID" value="ENSP00000377855.3"/>
    <property type="gene ID" value="ENSG00000155846.17"/>
</dbReference>
<dbReference type="Ensembl" id="ENST00000403750.5">
    <molecule id="Q86YN6-6"/>
    <property type="protein sequence ID" value="ENSP00000384403.1"/>
    <property type="gene ID" value="ENSG00000155846.17"/>
</dbReference>
<dbReference type="GeneID" id="133522"/>
<dbReference type="KEGG" id="hsa:133522"/>
<dbReference type="MANE-Select" id="ENST00000309241.10">
    <property type="protein sequence ID" value="ENSP00000312649.5"/>
    <property type="RefSeq nucleotide sequence ID" value="NM_133263.4"/>
    <property type="RefSeq protein sequence ID" value="NP_573570.3"/>
</dbReference>
<dbReference type="UCSC" id="uc003lrb.3">
    <molecule id="Q86YN6-1"/>
    <property type="organism name" value="human"/>
</dbReference>
<dbReference type="AGR" id="HGNC:30022"/>
<dbReference type="CTD" id="133522"/>
<dbReference type="DisGeNET" id="133522"/>
<dbReference type="GeneCards" id="PPARGC1B"/>
<dbReference type="HGNC" id="HGNC:30022">
    <property type="gene designation" value="PPARGC1B"/>
</dbReference>
<dbReference type="HPA" id="ENSG00000155846">
    <property type="expression patterns" value="Tissue enhanced (retina)"/>
</dbReference>
<dbReference type="MalaCards" id="PPARGC1B"/>
<dbReference type="MIM" id="608886">
    <property type="type" value="gene"/>
</dbReference>
<dbReference type="neXtProt" id="NX_Q86YN6"/>
<dbReference type="OpenTargets" id="ENSG00000155846"/>
<dbReference type="PharmGKB" id="PA134953410"/>
<dbReference type="VEuPathDB" id="HostDB:ENSG00000155846"/>
<dbReference type="eggNOG" id="ENOG502QTA7">
    <property type="taxonomic scope" value="Eukaryota"/>
</dbReference>
<dbReference type="GeneTree" id="ENSGT00950000183137"/>
<dbReference type="HOGENOM" id="CLU_014202_0_0_1"/>
<dbReference type="InParanoid" id="Q86YN6"/>
<dbReference type="OMA" id="EPTKPCC"/>
<dbReference type="OrthoDB" id="10047851at2759"/>
<dbReference type="PAN-GO" id="Q86YN6">
    <property type="GO annotations" value="5 GO annotations based on evolutionary models"/>
</dbReference>
<dbReference type="PhylomeDB" id="Q86YN6"/>
<dbReference type="TreeFam" id="TF343068"/>
<dbReference type="PathwayCommons" id="Q86YN6"/>
<dbReference type="Reactome" id="R-HSA-1989781">
    <property type="pathway name" value="PPARA activates gene expression"/>
</dbReference>
<dbReference type="Reactome" id="R-HSA-2151201">
    <property type="pathway name" value="Transcriptional activation of mitochondrial biogenesis"/>
</dbReference>
<dbReference type="Reactome" id="R-HSA-8939902">
    <property type="pathway name" value="Regulation of RUNX2 expression and activity"/>
</dbReference>
<dbReference type="Reactome" id="R-HSA-9841922">
    <property type="pathway name" value="MLL4 and MLL3 complexes regulate expression of PPARG target genes in adipogenesis and hepatic steatosis"/>
</dbReference>
<dbReference type="Reactome" id="R-HSA-9844594">
    <property type="pathway name" value="Transcriptional regulation of brown and beige adipocyte differentiation by EBF2"/>
</dbReference>
<dbReference type="SignaLink" id="Q86YN6"/>
<dbReference type="BioGRID-ORCS" id="133522">
    <property type="hits" value="341 hits in 1159 CRISPR screens"/>
</dbReference>
<dbReference type="ChiTaRS" id="PPARGC1B">
    <property type="organism name" value="human"/>
</dbReference>
<dbReference type="EvolutionaryTrace" id="Q86YN6"/>
<dbReference type="GeneWiki" id="PPARGC1B"/>
<dbReference type="GenomeRNAi" id="133522"/>
<dbReference type="Pharos" id="Q86YN6">
    <property type="development level" value="Tbio"/>
</dbReference>
<dbReference type="PRO" id="PR:Q86YN6"/>
<dbReference type="Proteomes" id="UP000005640">
    <property type="component" value="Chromosome 5"/>
</dbReference>
<dbReference type="RNAct" id="Q86YN6">
    <property type="molecule type" value="protein"/>
</dbReference>
<dbReference type="Bgee" id="ENSG00000155846">
    <property type="expression patterns" value="Expressed in endothelial cell and 145 other cell types or tissues"/>
</dbReference>
<dbReference type="ExpressionAtlas" id="Q86YN6">
    <property type="expression patterns" value="baseline and differential"/>
</dbReference>
<dbReference type="GO" id="GO:0005829">
    <property type="term" value="C:cytosol"/>
    <property type="evidence" value="ECO:0000314"/>
    <property type="project" value="HPA"/>
</dbReference>
<dbReference type="GO" id="GO:0016592">
    <property type="term" value="C:mediator complex"/>
    <property type="evidence" value="ECO:0000314"/>
    <property type="project" value="UniProtKB"/>
</dbReference>
<dbReference type="GO" id="GO:0005654">
    <property type="term" value="C:nucleoplasm"/>
    <property type="evidence" value="ECO:0000314"/>
    <property type="project" value="HPA"/>
</dbReference>
<dbReference type="GO" id="GO:0005634">
    <property type="term" value="C:nucleus"/>
    <property type="evidence" value="ECO:0000314"/>
    <property type="project" value="UniProtKB"/>
</dbReference>
<dbReference type="GO" id="GO:0050682">
    <property type="term" value="F:AF-2 domain binding"/>
    <property type="evidence" value="ECO:0000353"/>
    <property type="project" value="UniProtKB"/>
</dbReference>
<dbReference type="GO" id="GO:0030331">
    <property type="term" value="F:nuclear estrogen receptor binding"/>
    <property type="evidence" value="ECO:0000314"/>
    <property type="project" value="UniProtKB"/>
</dbReference>
<dbReference type="GO" id="GO:0003723">
    <property type="term" value="F:RNA binding"/>
    <property type="evidence" value="ECO:0000303"/>
    <property type="project" value="UniProtKB"/>
</dbReference>
<dbReference type="GO" id="GO:0003713">
    <property type="term" value="F:transcription coactivator activity"/>
    <property type="evidence" value="ECO:0000314"/>
    <property type="project" value="UniProtKB"/>
</dbReference>
<dbReference type="GO" id="GO:0097009">
    <property type="term" value="P:energy homeostasis"/>
    <property type="evidence" value="ECO:0000318"/>
    <property type="project" value="GO_Central"/>
</dbReference>
<dbReference type="GO" id="GO:0030520">
    <property type="term" value="P:estrogen receptor signaling pathway"/>
    <property type="evidence" value="ECO:0000314"/>
    <property type="project" value="UniProtKB"/>
</dbReference>
<dbReference type="GO" id="GO:0120162">
    <property type="term" value="P:positive regulation of cold-induced thermogenesis"/>
    <property type="evidence" value="ECO:0000250"/>
    <property type="project" value="YuBioLab"/>
</dbReference>
<dbReference type="GO" id="GO:0045672">
    <property type="term" value="P:positive regulation of osteoclast differentiation"/>
    <property type="evidence" value="ECO:0007669"/>
    <property type="project" value="Ensembl"/>
</dbReference>
<dbReference type="GO" id="GO:0045944">
    <property type="term" value="P:positive regulation of transcription by RNA polymerase II"/>
    <property type="evidence" value="ECO:0000314"/>
    <property type="project" value="UniProtKB"/>
</dbReference>
<dbReference type="GO" id="GO:0006355">
    <property type="term" value="P:regulation of DNA-templated transcription"/>
    <property type="evidence" value="ECO:0000314"/>
    <property type="project" value="UniProtKB"/>
</dbReference>
<dbReference type="CDD" id="cd12356">
    <property type="entry name" value="RRM_PPARGC1B"/>
    <property type="match status" value="1"/>
</dbReference>
<dbReference type="FunFam" id="3.30.70.330:FF:000353">
    <property type="entry name" value="PPARG coactivator 1 beta"/>
    <property type="match status" value="1"/>
</dbReference>
<dbReference type="Gene3D" id="3.30.70.330">
    <property type="match status" value="1"/>
</dbReference>
<dbReference type="InterPro" id="IPR012677">
    <property type="entry name" value="Nucleotide-bd_a/b_plait_sf"/>
</dbReference>
<dbReference type="InterPro" id="IPR034605">
    <property type="entry name" value="PGC-1"/>
</dbReference>
<dbReference type="InterPro" id="IPR034177">
    <property type="entry name" value="PPARGC1B_RRM"/>
</dbReference>
<dbReference type="InterPro" id="IPR035979">
    <property type="entry name" value="RBD_domain_sf"/>
</dbReference>
<dbReference type="InterPro" id="IPR000504">
    <property type="entry name" value="RRM_dom"/>
</dbReference>
<dbReference type="PANTHER" id="PTHR15528">
    <property type="entry name" value="PEROXISOME PROLIFERATOR ACTIVATED RECEPTOR GAMMA COACTIVATOR 1 PGC-1 -RELATED"/>
    <property type="match status" value="1"/>
</dbReference>
<dbReference type="PANTHER" id="PTHR15528:SF12">
    <property type="entry name" value="PEROXISOME PROLIFERATOR-ACTIVATED RECEPTOR GAMMA COACTIVATOR 1-BETA"/>
    <property type="match status" value="1"/>
</dbReference>
<dbReference type="Pfam" id="PF00076">
    <property type="entry name" value="RRM_1"/>
    <property type="match status" value="1"/>
</dbReference>
<dbReference type="SMART" id="SM00360">
    <property type="entry name" value="RRM"/>
    <property type="match status" value="1"/>
</dbReference>
<dbReference type="SUPFAM" id="SSF54928">
    <property type="entry name" value="RNA-binding domain, RBD"/>
    <property type="match status" value="1"/>
</dbReference>
<dbReference type="PROSITE" id="PS50102">
    <property type="entry name" value="RRM"/>
    <property type="match status" value="1"/>
</dbReference>
<gene>
    <name type="primary">PPARGC1B</name>
    <name type="synonym">PERC</name>
    <name type="synonym">PGC1</name>
    <name type="synonym">PGC1B</name>
    <name type="synonym">PPARGC1</name>
</gene>
<organism>
    <name type="scientific">Homo sapiens</name>
    <name type="common">Human</name>
    <dbReference type="NCBI Taxonomy" id="9606"/>
    <lineage>
        <taxon>Eukaryota</taxon>
        <taxon>Metazoa</taxon>
        <taxon>Chordata</taxon>
        <taxon>Craniata</taxon>
        <taxon>Vertebrata</taxon>
        <taxon>Euteleostomi</taxon>
        <taxon>Mammalia</taxon>
        <taxon>Eutheria</taxon>
        <taxon>Euarchontoglires</taxon>
        <taxon>Primates</taxon>
        <taxon>Haplorrhini</taxon>
        <taxon>Catarrhini</taxon>
        <taxon>Hominidae</taxon>
        <taxon>Homo</taxon>
    </lineage>
</organism>
<sequence length="1023" mass="113222">MAGNDCGALLDEELSSFFLNYLADTQGGGSGEEQLYADFPELDLSQLDASDFDSATCFGELQWCPENSETEPNQYSPDDSELFQIDSENEALLAELTKTLDDIPEDDVGLAAFPALDGGDALSCTSASPAPSSAPPSPAPEKPSAPAPEVDELSLLQKLLLATSYPTSSSDTQKEGTAWRQAGLRSKSQRPCVKADSTQDKKAPMMQSQSRSCTELHKHLTSAQCCLQDRGLQPPCLQSPRLPAKEDKEPGEDCPSPQPAPASPRDSLALGRADPGAPVSQEDMQAMVQLIRYMHTYCLPQRKLPPQTPEPLPKACSNPSQQVRSRPWSRHHSKASWAEFSILRELLAQDVLCDVSKPYRLATPVYASLTPRSRPRPPKDSQASPGRPSSVEEVRIAASPKSTGPRPSLRPLRLEVKREVRRPARLQQQEEEDEEEEEEEEEEEKEEEEEWGRKRPGRGLPWTKLGRKLESSVCPVRRSRRLNPELGPWLTFADEPLVPSEPQGALPSLCLAPKAYDVERELGSPTDEDSGQDQQLLRGPQIPALESPCESGCGDMDEDPSCPQLPPRDSPRCLMLALSQSDPTFGKKSFEQTLTVELCGTAGLTPPTTPPYKPTEEDPFKPDIKHSLGKEIALSLPSPEGLSLKATPGAAHKLPKKHPERSELLSHLRHATAQPASQAGQKRPFSCSFGDHDYCQVLRPEGVLQRKVLRSWEPSGVHLEDWPQQGAPWAEAQAPGREEDRSCDAGAPPKDSTLLRDHEIRASLTKHFGLLETALEEEDLASCKSPEYDTVFEDSSSSSGESSFLPEEEEEEGEEEEEDDEEEDSGVSPTCSDHCPYQSPPSKANRQLCSRSRSSSGSSPCHSWSPATRRNFRCESRGPCSDRTPSIRHARKRREKAIGEGRVVYIQNLSSDMSSRELKRRFEVFGEIEECEVLTRNRRGEKYGFITYRCSEHAALSLTKGAALRKRNEPSFQLSYGGLRHFCWPRYTDYDSNSEEALPASGKSKYEAMDFDSLLKEAQQSLH</sequence>
<comment type="function">
    <text evidence="4 5 8 10">Plays a role of stimulator of transcription factors and nuclear receptors activities. Activates transcriptional activity of estrogen receptor alpha, nuclear respiratory factor 1 (NRF1) and glucocorticoid receptor in the presence of glucocorticoids. May play a role in constitutive non-adrenergic-mediated mitochondrial biogenesis as suggested by increased basal oxygen consumption and mitochondrial number when overexpressed. May be involved in fat oxidation and non-oxidative glucose metabolism and in the regulation of energy expenditure. Induces the expression of PERM1 in the skeletal muscle in an ESRRA-dependent manner.</text>
</comment>
<comment type="subunit">
    <text evidence="1 4">Interacts with hepatocyte nuclear factor 4-alpha/HNF4A, Sterol regulatory binding transcription factor 1/SREBF1, PPAR-alpha/PPARA, thyroid hormone receptor beta/THRB and host cell factor/HCFC1. Interacts with estrogen-related receptor gamma/ESRRG and alpha/ESRRA. Interacts with PRDM16 (By similarity). Interacts with estrogen receptor alpha/ESR1.</text>
</comment>
<comment type="subcellular location">
    <subcellularLocation>
        <location evidence="4">Nucleus</location>
    </subcellularLocation>
</comment>
<comment type="alternative products">
    <event type="alternative splicing"/>
    <isoform>
        <id>Q86YN6-1</id>
        <name>1</name>
        <name>PGC1beta-1a</name>
        <sequence type="displayed"/>
    </isoform>
    <isoform>
        <id>Q86YN6-2</id>
        <name>2</name>
        <name>PGC1beta-2a</name>
        <sequence type="described" ref="VSP_019299"/>
    </isoform>
    <isoform>
        <id>Q86YN6-3</id>
        <name>3</name>
        <name>PGC1beta-1b</name>
        <sequence type="described" ref="VSP_019301"/>
    </isoform>
    <isoform>
        <id>Q86YN6-4</id>
        <name>4</name>
        <name>PGC1beta-2b</name>
        <sequence type="described" ref="VSP_019299 VSP_019301"/>
    </isoform>
    <isoform>
        <id>Q86YN6-5</id>
        <name>5</name>
        <name>PERC-s</name>
        <sequence type="described" ref="VSP_019300"/>
    </isoform>
    <isoform>
        <id>Q86YN6-6</id>
        <name>6</name>
        <sequence type="described" ref="VSP_043374 VSP_019300"/>
    </isoform>
</comment>
<comment type="tissue specificity">
    <text evidence="4 5">Ubiquitous with higher expression in heart, brain and skeletal muscle.</text>
</comment>
<comment type="induction">
    <text evidence="6 8">Repressed by saturated fatty acids such as palmitate and stearate in skeletal muscle cells. Induced by insulin and reduced by aging in skeletal muscle biopsies. Down-regulated in type 2 diabetes mellitus subjects as well as in pre-diabetics.</text>
</comment>
<comment type="domain">
    <text evidence="1">Contains 2 Leu-Xaa-Xaa-Leu-Leu (LXXLL) motif, which are usually required for the association with nuclear receptors.</text>
</comment>
<comment type="polymorphism">
    <text evidence="9">Variation of PPARGC1B may contribute to the pathogenesis of obesity, with a widespread Ala-203 allele being a risk factor for the development of this common disorders.</text>
</comment>
<comment type="miscellaneous">
    <molecule>Isoform 5</molecule>
    <text evidence="14">Lacks LXXLL motif 1 and has a reduced ability to enhance the hormone-dependent activity of estrogen receptor alpha.</text>
</comment>
<feature type="chain" id="PRO_0000240158" description="Peroxisome proliferator-activated receptor gamma coactivator 1-beta">
    <location>
        <begin position="1"/>
        <end position="1023"/>
    </location>
</feature>
<feature type="domain" description="RRM" evidence="2">
    <location>
        <begin position="902"/>
        <end position="976"/>
    </location>
</feature>
<feature type="region of interest" description="Abolishes DNA transcriptional activity when missing">
    <location>
        <begin position="1"/>
        <end position="91"/>
    </location>
</feature>
<feature type="region of interest" description="Disordered" evidence="3">
    <location>
        <begin position="122"/>
        <end position="148"/>
    </location>
</feature>
<feature type="region of interest" description="Disordered" evidence="3">
    <location>
        <begin position="165"/>
        <end position="210"/>
    </location>
</feature>
<feature type="region of interest" description="Disordered" evidence="3">
    <location>
        <begin position="237"/>
        <end position="278"/>
    </location>
</feature>
<feature type="region of interest" description="Disordered" evidence="3">
    <location>
        <begin position="302"/>
        <end position="331"/>
    </location>
</feature>
<feature type="region of interest" description="Disordered" evidence="3">
    <location>
        <begin position="369"/>
        <end position="463"/>
    </location>
</feature>
<feature type="region of interest" description="Disordered" evidence="3">
    <location>
        <begin position="520"/>
        <end position="567"/>
    </location>
</feature>
<feature type="region of interest" description="Disordered" evidence="3">
    <location>
        <begin position="601"/>
        <end position="623"/>
    </location>
</feature>
<feature type="region of interest" description="Disordered" evidence="3">
    <location>
        <begin position="636"/>
        <end position="683"/>
    </location>
</feature>
<feature type="region of interest" description="Disordered" evidence="3">
    <location>
        <begin position="717"/>
        <end position="758"/>
    </location>
</feature>
<feature type="region of interest" description="Disordered" evidence="3">
    <location>
        <begin position="779"/>
        <end position="867"/>
    </location>
</feature>
<feature type="short sequence motif" description="LXXLL motif 1">
    <location>
        <begin position="156"/>
        <end position="160"/>
    </location>
</feature>
<feature type="short sequence motif" description="LXXLL motif 2">
    <location>
        <begin position="343"/>
        <end position="347"/>
    </location>
</feature>
<feature type="short sequence motif" description="HCFC1-binding-motif (HBM)">
    <location>
        <begin position="691"/>
        <end position="694"/>
    </location>
</feature>
<feature type="compositionally biased region" description="Pro residues" evidence="3">
    <location>
        <begin position="132"/>
        <end position="146"/>
    </location>
</feature>
<feature type="compositionally biased region" description="Basic and acidic residues" evidence="3">
    <location>
        <begin position="412"/>
        <end position="422"/>
    </location>
</feature>
<feature type="compositionally biased region" description="Acidic residues" evidence="3">
    <location>
        <begin position="429"/>
        <end position="450"/>
    </location>
</feature>
<feature type="compositionally biased region" description="Basic and acidic residues" evidence="3">
    <location>
        <begin position="614"/>
        <end position="623"/>
    </location>
</feature>
<feature type="compositionally biased region" description="Low complexity" evidence="3">
    <location>
        <begin position="793"/>
        <end position="805"/>
    </location>
</feature>
<feature type="compositionally biased region" description="Acidic residues" evidence="3">
    <location>
        <begin position="806"/>
        <end position="825"/>
    </location>
</feature>
<feature type="compositionally biased region" description="Low complexity" evidence="3">
    <location>
        <begin position="849"/>
        <end position="866"/>
    </location>
</feature>
<feature type="modified residue" description="Phosphoserine" evidence="16">
    <location>
        <position position="384"/>
    </location>
</feature>
<feature type="modified residue" description="Phosphoserine" evidence="15 16">
    <location>
        <position position="524"/>
    </location>
</feature>
<feature type="modified residue" description="Phosphoserine" evidence="16">
    <location>
        <position position="638"/>
    </location>
</feature>
<feature type="splice variant" id="VSP_019299" description="In isoform 2 and isoform 4." evidence="12">
    <original>MAGNDCGALLDEELSSFFLNYLADTQ</original>
    <variation>MGVYK</variation>
    <location>
        <begin position="1"/>
        <end position="26"/>
    </location>
</feature>
<feature type="splice variant" id="VSP_043374" description="In isoform 6." evidence="13">
    <original>MAGNDCGALLDEELSSFFLNYLADTQ</original>
    <variation>M</variation>
    <location>
        <begin position="1"/>
        <end position="26"/>
    </location>
</feature>
<feature type="splice variant" id="VSP_019300" description="In isoform 5 and isoform 6." evidence="11 13">
    <location>
        <begin position="156"/>
        <end position="194"/>
    </location>
</feature>
<feature type="splice variant" id="VSP_019301" description="In isoform 3 and isoform 4." evidence="12">
    <original>DSNSEEALPASGKSKYEAMDFDSLLKEAQQSLH</original>
    <variation>GKPLKPSHSLVRLKAWEAVPSLNKTQS</variation>
    <location>
        <begin position="991"/>
        <end position="1023"/>
    </location>
</feature>
<feature type="sequence variant" id="VAR_026698" description="In dbSNP:rs7732671." evidence="9">
    <original>A</original>
    <variation>P</variation>
    <location>
        <position position="203"/>
    </location>
</feature>
<feature type="sequence variant" id="VAR_026699" description="In dbSNP:rs45520937." evidence="5">
    <original>R</original>
    <variation>Q</variation>
    <location>
        <position position="265"/>
    </location>
</feature>
<feature type="sequence variant" id="VAR_026700" description="In dbSNP:rs17572019." evidence="9">
    <original>V</original>
    <variation>I</variation>
    <location>
        <position position="279"/>
    </location>
</feature>
<feature type="sequence variant" id="VAR_026701" description="In dbSNP:rs11959820." evidence="7 9">
    <original>R</original>
    <variation>S</variation>
    <location>
        <position position="292"/>
    </location>
</feature>
<feature type="mutagenesis site" description="Reduces DNA transcriptional activity." evidence="4">
    <original>LLAEL</original>
    <variation>AAAEA</variation>
    <location>
        <begin position="92"/>
        <end position="96"/>
    </location>
</feature>
<feature type="mutagenesis site" description="Reduces interaction and activation of ESR1. Loss of interaction and activation of ESR1; when associated with 343-AREAA-347." evidence="4">
    <original>LLQKLL</original>
    <variation>AAQKAA</variation>
    <location>
        <begin position="155"/>
        <end position="160"/>
    </location>
</feature>
<feature type="mutagenesis site" description="Reduces interaction and activation of ESR1. Loss of interaction and activation of ESR1; when associated with 155-AAQKAA-160." evidence="4">
    <original>LRELL</original>
    <variation>AREAA</variation>
    <location>
        <begin position="343"/>
        <end position="347"/>
    </location>
</feature>
<feature type="sequence conflict" description="In Ref. 3; BAC04541." evidence="14" ref="3">
    <original>E</original>
    <variation>G</variation>
    <location>
        <position position="558"/>
    </location>
</feature>
<feature type="helix" evidence="17">
    <location>
        <begin position="155"/>
        <end position="162"/>
    </location>
</feature>
<feature type="helix" evidence="18">
    <location>
        <begin position="1011"/>
        <end position="1021"/>
    </location>
</feature>
<accession>Q86YN6</accession>
<accession>A2RUM8</accession>
<accession>A2RUN0</accession>
<accession>B3KVW0</accession>
<accession>Q86YN3</accession>
<accession>Q86YN4</accession>
<accession>Q86YN5</accession>
<accession>Q8N1N9</accession>
<accession>Q8TDE4</accession>
<accession>Q8TDE5</accession>
<name>PRGC2_HUMAN</name>
<proteinExistence type="evidence at protein level"/>
<reference key="1">
    <citation type="journal article" date="2002" name="J. Biol. Chem.">
        <title>The PGC-1-related protein PERC is a selective coactivator of estrogen receptor alpha.</title>
        <authorList>
            <person name="Kressler D."/>
            <person name="Schreiber S.N."/>
            <person name="Knutti D."/>
            <person name="Kralli A."/>
        </authorList>
    </citation>
    <scope>NUCLEOTIDE SEQUENCE [MRNA] (ISOFORMS 1 AND 5)</scope>
    <scope>SUBCELLULAR LOCATION</scope>
    <scope>MOTIF</scope>
    <scope>TISSUE SPECIFICITY</scope>
    <scope>MUTAGENESIS OF 92-LEU--LEU-96; 155-LEU--LEU-160 AND 343-LEU--LEU-347</scope>
    <scope>INTERACTION WITH ESR1</scope>
    <scope>FUNCTION</scope>
</reference>
<reference key="2">
    <citation type="journal article" date="2003" name="Biochem. J.">
        <title>Characterization of the human, mouse and rat PGC1 beta (peroxisome-proliferator-activated receptor-gamma co-activator 1 beta) gene in vitro and in vivo.</title>
        <authorList>
            <person name="Meirhaeghe A."/>
            <person name="Crowley V."/>
            <person name="Lenaghan C."/>
            <person name="Lelliott C."/>
            <person name="Green K."/>
            <person name="Stewart A."/>
            <person name="Hart K."/>
            <person name="Schinner S."/>
            <person name="Sethi J.K."/>
            <person name="Yeo G."/>
            <person name="Brand M.D."/>
            <person name="Cortright R.N."/>
            <person name="O'Rahilly S."/>
            <person name="Montague C."/>
            <person name="Vidal-Puig A.J."/>
        </authorList>
    </citation>
    <scope>NUCLEOTIDE SEQUENCE [MRNA] (ISOFORMS 1; 2; 3 AND 4)</scope>
    <scope>TISSUE SPECIFICITY</scope>
    <scope>FUNCTION</scope>
    <scope>VARIANT GLN-265</scope>
</reference>
<reference key="3">
    <citation type="journal article" date="2004" name="Nat. Genet.">
        <title>Complete sequencing and characterization of 21,243 full-length human cDNAs.</title>
        <authorList>
            <person name="Ota T."/>
            <person name="Suzuki Y."/>
            <person name="Nishikawa T."/>
            <person name="Otsuki T."/>
            <person name="Sugiyama T."/>
            <person name="Irie R."/>
            <person name="Wakamatsu A."/>
            <person name="Hayashi K."/>
            <person name="Sato H."/>
            <person name="Nagai K."/>
            <person name="Kimura K."/>
            <person name="Makita H."/>
            <person name="Sekine M."/>
            <person name="Obayashi M."/>
            <person name="Nishi T."/>
            <person name="Shibahara T."/>
            <person name="Tanaka T."/>
            <person name="Ishii S."/>
            <person name="Yamamoto J."/>
            <person name="Saito K."/>
            <person name="Kawai Y."/>
            <person name="Isono Y."/>
            <person name="Nakamura Y."/>
            <person name="Nagahari K."/>
            <person name="Murakami K."/>
            <person name="Yasuda T."/>
            <person name="Iwayanagi T."/>
            <person name="Wagatsuma M."/>
            <person name="Shiratori A."/>
            <person name="Sudo H."/>
            <person name="Hosoiri T."/>
            <person name="Kaku Y."/>
            <person name="Kodaira H."/>
            <person name="Kondo H."/>
            <person name="Sugawara M."/>
            <person name="Takahashi M."/>
            <person name="Kanda K."/>
            <person name="Yokoi T."/>
            <person name="Furuya T."/>
            <person name="Kikkawa E."/>
            <person name="Omura Y."/>
            <person name="Abe K."/>
            <person name="Kamihara K."/>
            <person name="Katsuta N."/>
            <person name="Sato K."/>
            <person name="Tanikawa M."/>
            <person name="Yamazaki M."/>
            <person name="Ninomiya K."/>
            <person name="Ishibashi T."/>
            <person name="Yamashita H."/>
            <person name="Murakawa K."/>
            <person name="Fujimori K."/>
            <person name="Tanai H."/>
            <person name="Kimata M."/>
            <person name="Watanabe M."/>
            <person name="Hiraoka S."/>
            <person name="Chiba Y."/>
            <person name="Ishida S."/>
            <person name="Ono Y."/>
            <person name="Takiguchi S."/>
            <person name="Watanabe S."/>
            <person name="Yosida M."/>
            <person name="Hotuta T."/>
            <person name="Kusano J."/>
            <person name="Kanehori K."/>
            <person name="Takahashi-Fujii A."/>
            <person name="Hara H."/>
            <person name="Tanase T.-O."/>
            <person name="Nomura Y."/>
            <person name="Togiya S."/>
            <person name="Komai F."/>
            <person name="Hara R."/>
            <person name="Takeuchi K."/>
            <person name="Arita M."/>
            <person name="Imose N."/>
            <person name="Musashino K."/>
            <person name="Yuuki H."/>
            <person name="Oshima A."/>
            <person name="Sasaki N."/>
            <person name="Aotsuka S."/>
            <person name="Yoshikawa Y."/>
            <person name="Matsunawa H."/>
            <person name="Ichihara T."/>
            <person name="Shiohata N."/>
            <person name="Sano S."/>
            <person name="Moriya S."/>
            <person name="Momiyama H."/>
            <person name="Satoh N."/>
            <person name="Takami S."/>
            <person name="Terashima Y."/>
            <person name="Suzuki O."/>
            <person name="Nakagawa S."/>
            <person name="Senoh A."/>
            <person name="Mizoguchi H."/>
            <person name="Goto Y."/>
            <person name="Shimizu F."/>
            <person name="Wakebe H."/>
            <person name="Hishigaki H."/>
            <person name="Watanabe T."/>
            <person name="Sugiyama A."/>
            <person name="Takemoto M."/>
            <person name="Kawakami B."/>
            <person name="Yamazaki M."/>
            <person name="Watanabe K."/>
            <person name="Kumagai A."/>
            <person name="Itakura S."/>
            <person name="Fukuzumi Y."/>
            <person name="Fujimori Y."/>
            <person name="Komiyama M."/>
            <person name="Tashiro H."/>
            <person name="Tanigami A."/>
            <person name="Fujiwara T."/>
            <person name="Ono T."/>
            <person name="Yamada K."/>
            <person name="Fujii Y."/>
            <person name="Ozaki K."/>
            <person name="Hirao M."/>
            <person name="Ohmori Y."/>
            <person name="Kawabata A."/>
            <person name="Hikiji T."/>
            <person name="Kobatake N."/>
            <person name="Inagaki H."/>
            <person name="Ikema Y."/>
            <person name="Okamoto S."/>
            <person name="Okitani R."/>
            <person name="Kawakami T."/>
            <person name="Noguchi S."/>
            <person name="Itoh T."/>
            <person name="Shigeta K."/>
            <person name="Senba T."/>
            <person name="Matsumura K."/>
            <person name="Nakajima Y."/>
            <person name="Mizuno T."/>
            <person name="Morinaga M."/>
            <person name="Sasaki M."/>
            <person name="Togashi T."/>
            <person name="Oyama M."/>
            <person name="Hata H."/>
            <person name="Watanabe M."/>
            <person name="Komatsu T."/>
            <person name="Mizushima-Sugano J."/>
            <person name="Satoh T."/>
            <person name="Shirai Y."/>
            <person name="Takahashi Y."/>
            <person name="Nakagawa K."/>
            <person name="Okumura K."/>
            <person name="Nagase T."/>
            <person name="Nomura N."/>
            <person name="Kikuchi H."/>
            <person name="Masuho Y."/>
            <person name="Yamashita R."/>
            <person name="Nakai K."/>
            <person name="Yada T."/>
            <person name="Nakamura Y."/>
            <person name="Ohara O."/>
            <person name="Isogai T."/>
            <person name="Sugano S."/>
        </authorList>
    </citation>
    <scope>NUCLEOTIDE SEQUENCE [LARGE SCALE MRNA] (ISOFORMS 1 AND 6)</scope>
    <source>
        <tissue>Tongue</tissue>
    </source>
</reference>
<reference key="4">
    <citation type="journal article" date="2004" name="Nature">
        <title>The DNA sequence and comparative analysis of human chromosome 5.</title>
        <authorList>
            <person name="Schmutz J."/>
            <person name="Martin J."/>
            <person name="Terry A."/>
            <person name="Couronne O."/>
            <person name="Grimwood J."/>
            <person name="Lowry S."/>
            <person name="Gordon L.A."/>
            <person name="Scott D."/>
            <person name="Xie G."/>
            <person name="Huang W."/>
            <person name="Hellsten U."/>
            <person name="Tran-Gyamfi M."/>
            <person name="She X."/>
            <person name="Prabhakar S."/>
            <person name="Aerts A."/>
            <person name="Altherr M."/>
            <person name="Bajorek E."/>
            <person name="Black S."/>
            <person name="Branscomb E."/>
            <person name="Caoile C."/>
            <person name="Challacombe J.F."/>
            <person name="Chan Y.M."/>
            <person name="Denys M."/>
            <person name="Detter J.C."/>
            <person name="Escobar J."/>
            <person name="Flowers D."/>
            <person name="Fotopulos D."/>
            <person name="Glavina T."/>
            <person name="Gomez M."/>
            <person name="Gonzales E."/>
            <person name="Goodstein D."/>
            <person name="Grigoriev I."/>
            <person name="Groza M."/>
            <person name="Hammon N."/>
            <person name="Hawkins T."/>
            <person name="Haydu L."/>
            <person name="Israni S."/>
            <person name="Jett J."/>
            <person name="Kadner K."/>
            <person name="Kimball H."/>
            <person name="Kobayashi A."/>
            <person name="Lopez F."/>
            <person name="Lou Y."/>
            <person name="Martinez D."/>
            <person name="Medina C."/>
            <person name="Morgan J."/>
            <person name="Nandkeshwar R."/>
            <person name="Noonan J.P."/>
            <person name="Pitluck S."/>
            <person name="Pollard M."/>
            <person name="Predki P."/>
            <person name="Priest J."/>
            <person name="Ramirez L."/>
            <person name="Retterer J."/>
            <person name="Rodriguez A."/>
            <person name="Rogers S."/>
            <person name="Salamov A."/>
            <person name="Salazar A."/>
            <person name="Thayer N."/>
            <person name="Tice H."/>
            <person name="Tsai M."/>
            <person name="Ustaszewska A."/>
            <person name="Vo N."/>
            <person name="Wheeler J."/>
            <person name="Wu K."/>
            <person name="Yang J."/>
            <person name="Dickson M."/>
            <person name="Cheng J.-F."/>
            <person name="Eichler E.E."/>
            <person name="Olsen A."/>
            <person name="Pennacchio L.A."/>
            <person name="Rokhsar D.S."/>
            <person name="Richardson P."/>
            <person name="Lucas S.M."/>
            <person name="Myers R.M."/>
            <person name="Rubin E.M."/>
        </authorList>
    </citation>
    <scope>NUCLEOTIDE SEQUENCE [LARGE SCALE GENOMIC DNA]</scope>
</reference>
<reference key="5">
    <citation type="submission" date="2005-09" db="EMBL/GenBank/DDBJ databases">
        <authorList>
            <person name="Mural R.J."/>
            <person name="Istrail S."/>
            <person name="Sutton G.G."/>
            <person name="Florea L."/>
            <person name="Halpern A.L."/>
            <person name="Mobarry C.M."/>
            <person name="Lippert R."/>
            <person name="Walenz B."/>
            <person name="Shatkay H."/>
            <person name="Dew I."/>
            <person name="Miller J.R."/>
            <person name="Flanigan M.J."/>
            <person name="Edwards N.J."/>
            <person name="Bolanos R."/>
            <person name="Fasulo D."/>
            <person name="Halldorsson B.V."/>
            <person name="Hannenhalli S."/>
            <person name="Turner R."/>
            <person name="Yooseph S."/>
            <person name="Lu F."/>
            <person name="Nusskern D.R."/>
            <person name="Shue B.C."/>
            <person name="Zheng X.H."/>
            <person name="Zhong F."/>
            <person name="Delcher A.L."/>
            <person name="Huson D.H."/>
            <person name="Kravitz S.A."/>
            <person name="Mouchard L."/>
            <person name="Reinert K."/>
            <person name="Remington K.A."/>
            <person name="Clark A.G."/>
            <person name="Waterman M.S."/>
            <person name="Eichler E.E."/>
            <person name="Adams M.D."/>
            <person name="Hunkapiller M.W."/>
            <person name="Myers E.W."/>
            <person name="Venter J.C."/>
        </authorList>
    </citation>
    <scope>NUCLEOTIDE SEQUENCE [LARGE SCALE GENOMIC DNA]</scope>
</reference>
<reference key="6">
    <citation type="journal article" date="2004" name="Genome Res.">
        <title>The status, quality, and expansion of the NIH full-length cDNA project: the Mammalian Gene Collection (MGC).</title>
        <authorList>
            <consortium name="The MGC Project Team"/>
        </authorList>
    </citation>
    <scope>NUCLEOTIDE SEQUENCE [LARGE SCALE MRNA] (ISOFORM 1)</scope>
    <scope>VARIANT SER-292</scope>
</reference>
<reference key="7">
    <citation type="journal article" date="2003" name="Proc. Natl. Acad. Sci. U.S.A.">
        <title>Coordinated reduction of genes of oxidative metabolism in humans with insulin resistance and diabetes: potential role of PGC1 and NRF1.</title>
        <authorList>
            <person name="Patti M.E."/>
            <person name="Butte A.J."/>
            <person name="Crunkhorn S."/>
            <person name="Cusi K."/>
            <person name="Berria R."/>
            <person name="Kashyap S."/>
            <person name="Miyazaki Y."/>
            <person name="Kohane I."/>
            <person name="Costello M."/>
            <person name="Saccone R."/>
            <person name="Landaker E.J."/>
            <person name="Goldfine A.B."/>
            <person name="Mun E."/>
            <person name="DeFronzo R."/>
            <person name="Finlayson J."/>
            <person name="Kahn C.R."/>
            <person name="Mandarino L.J."/>
        </authorList>
    </citation>
    <scope>INDUCTION</scope>
</reference>
<reference key="8">
    <citation type="journal article" date="2004" name="J. Clin. Invest.">
        <title>Multiple environmental and genetic factors influence skeletal muscle PGC-1alpha and PGC-1beta gene expression in twins.</title>
        <authorList>
            <person name="Ling C."/>
            <person name="Poulsen P."/>
            <person name="Carlsson E."/>
            <person name="Ridderstrale M."/>
            <person name="Almgren P."/>
            <person name="Wojtaszewski J."/>
            <person name="Beck-Nielsen H."/>
            <person name="Groop L."/>
            <person name="Vaag A."/>
        </authorList>
    </citation>
    <scope>FUNCTION</scope>
    <scope>INDUCTION BY INSULIN AND AGING</scope>
</reference>
<reference key="9">
    <citation type="journal article" date="2005" name="J. Med. Genet.">
        <title>Evidence of an association between genetic variation of the coactivator PGC-1beta and obesity.</title>
        <authorList>
            <person name="Andersen G."/>
            <person name="Wegner L."/>
            <person name="Yanagisawa K."/>
            <person name="Rose C.S."/>
            <person name="Lin J."/>
            <person name="Gluemer C."/>
            <person name="Drivsholm T."/>
            <person name="Borch-Johnsen K."/>
            <person name="Jorgensen T."/>
            <person name="Hansen T."/>
            <person name="Spiegelman B.M."/>
            <person name="Pedersen O."/>
        </authorList>
    </citation>
    <scope>POLYMORPHISM</scope>
    <scope>VARIANTS PRO-203; ILE-279 AND SER-292</scope>
</reference>
<reference key="10">
    <citation type="journal article" date="2005" name="Diabetologia">
        <title>Fatty acid-induced differential regulation of the genes encoding peroxisome proliferator-activated receptor-gamma coactivator-1alpha and -1beta in human skeletal muscle cells that have been differentiated in vitro.</title>
        <authorList>
            <person name="Staiger H."/>
            <person name="Staiger K."/>
            <person name="Haas C."/>
            <person name="Weisser M."/>
            <person name="Machicao F."/>
            <person name="Haering H.-U."/>
        </authorList>
    </citation>
    <scope>REGULATION BY FATTY ACIDS</scope>
</reference>
<reference key="11">
    <citation type="journal article" date="2008" name="Proc. Natl. Acad. Sci. U.S.A.">
        <title>A quantitative atlas of mitotic phosphorylation.</title>
        <authorList>
            <person name="Dephoure N."/>
            <person name="Zhou C."/>
            <person name="Villen J."/>
            <person name="Beausoleil S.A."/>
            <person name="Bakalarski C.E."/>
            <person name="Elledge S.J."/>
            <person name="Gygi S.P."/>
        </authorList>
    </citation>
    <scope>PHOSPHORYLATION [LARGE SCALE ANALYSIS] AT SER-524</scope>
    <scope>IDENTIFICATION BY MASS SPECTROMETRY [LARGE SCALE ANALYSIS]</scope>
    <source>
        <tissue>Cervix carcinoma</tissue>
    </source>
</reference>
<reference key="12">
    <citation type="journal article" date="2013" name="J. Biol. Chem.">
        <title>Peroxisome proliferator-activated receptor gamma coactivator 1 (PGC-1)- and estrogen-related receptor (ERR)-induced regulator in muscle 1 (Perm1) is a tissue-specific regulator of oxidative capacity in skeletal muscle cells.</title>
        <authorList>
            <person name="Cho Y."/>
            <person name="Hazen B.C."/>
            <person name="Russell A.P."/>
            <person name="Kralli A."/>
        </authorList>
    </citation>
    <scope>FUNCTION</scope>
</reference>
<reference key="13">
    <citation type="journal article" date="2013" name="J. Proteome Res.">
        <title>Toward a comprehensive characterization of a human cancer cell phosphoproteome.</title>
        <authorList>
            <person name="Zhou H."/>
            <person name="Di Palma S."/>
            <person name="Preisinger C."/>
            <person name="Peng M."/>
            <person name="Polat A.N."/>
            <person name="Heck A.J."/>
            <person name="Mohammed S."/>
        </authorList>
    </citation>
    <scope>PHOSPHORYLATION [LARGE SCALE ANALYSIS] AT SER-384; SER-524 AND SER-638</scope>
    <scope>IDENTIFICATION BY MASS SPECTROMETRY [LARGE SCALE ANALYSIS]</scope>
    <source>
        <tissue>Cervix carcinoma</tissue>
        <tissue>Erythroleukemia</tissue>
    </source>
</reference>
<protein>
    <recommendedName>
        <fullName>Peroxisome proliferator-activated receptor gamma coactivator 1-beta</fullName>
        <shortName>PGC-1-beta</shortName>
        <shortName>PPAR-gamma coactivator 1-beta</shortName>
        <shortName>PPARGC-1-beta</shortName>
    </recommendedName>
    <alternativeName>
        <fullName>PGC-1-related estrogen receptor alpha coactivator</fullName>
    </alternativeName>
</protein>